<sequence>MSVLQVLHIPDERLRKVAKPVEEVNAEIQRIVDDMFETMYAEEGIGLAATQVDIHQRIIVIDVSENRDERLVLINPELLEKSGETGIEEGCLSIPKQRALVPRAEKVKIRALDRDGKPFELEADGLLAICIQHEMDHLVGKLFMDYLSPLKQQRIRQKVEKLDRLKARA</sequence>
<protein>
    <recommendedName>
        <fullName evidence="1">Peptide deformylase</fullName>
        <shortName evidence="1">PDF</shortName>
        <ecNumber evidence="1">3.5.1.88</ecNumber>
    </recommendedName>
    <alternativeName>
        <fullName evidence="1">Polypeptide deformylase</fullName>
    </alternativeName>
</protein>
<reference key="1">
    <citation type="submission" date="2008-05" db="EMBL/GenBank/DDBJ databases">
        <title>Complete sequence of Shigella boydii serotype 18 strain BS512.</title>
        <authorList>
            <person name="Rasko D.A."/>
            <person name="Rosovitz M."/>
            <person name="Maurelli A.T."/>
            <person name="Myers G."/>
            <person name="Seshadri R."/>
            <person name="Cer R."/>
            <person name="Jiang L."/>
            <person name="Ravel J."/>
            <person name="Sebastian Y."/>
        </authorList>
    </citation>
    <scope>NUCLEOTIDE SEQUENCE [LARGE SCALE GENOMIC DNA]</scope>
    <source>
        <strain>CDC 3083-94 / BS512</strain>
    </source>
</reference>
<evidence type="ECO:0000255" key="1">
    <source>
        <dbReference type="HAMAP-Rule" id="MF_00163"/>
    </source>
</evidence>
<gene>
    <name evidence="1" type="primary">def</name>
    <name type="ordered locus">SbBS512_E3671</name>
</gene>
<proteinExistence type="inferred from homology"/>
<comment type="function">
    <text evidence="1">Removes the formyl group from the N-terminal Met of newly synthesized proteins. Requires at least a dipeptide for an efficient rate of reaction. N-terminal L-methionine is a prerequisite for activity but the enzyme has broad specificity at other positions.</text>
</comment>
<comment type="catalytic activity">
    <reaction evidence="1">
        <text>N-terminal N-formyl-L-methionyl-[peptide] + H2O = N-terminal L-methionyl-[peptide] + formate</text>
        <dbReference type="Rhea" id="RHEA:24420"/>
        <dbReference type="Rhea" id="RHEA-COMP:10639"/>
        <dbReference type="Rhea" id="RHEA-COMP:10640"/>
        <dbReference type="ChEBI" id="CHEBI:15377"/>
        <dbReference type="ChEBI" id="CHEBI:15740"/>
        <dbReference type="ChEBI" id="CHEBI:49298"/>
        <dbReference type="ChEBI" id="CHEBI:64731"/>
        <dbReference type="EC" id="3.5.1.88"/>
    </reaction>
</comment>
<comment type="cofactor">
    <cofactor evidence="1">
        <name>Fe(2+)</name>
        <dbReference type="ChEBI" id="CHEBI:29033"/>
    </cofactor>
    <text evidence="1">Binds 1 Fe(2+) ion.</text>
</comment>
<comment type="similarity">
    <text evidence="1">Belongs to the polypeptide deformylase family.</text>
</comment>
<name>DEF_SHIB3</name>
<organism>
    <name type="scientific">Shigella boydii serotype 18 (strain CDC 3083-94 / BS512)</name>
    <dbReference type="NCBI Taxonomy" id="344609"/>
    <lineage>
        <taxon>Bacteria</taxon>
        <taxon>Pseudomonadati</taxon>
        <taxon>Pseudomonadota</taxon>
        <taxon>Gammaproteobacteria</taxon>
        <taxon>Enterobacterales</taxon>
        <taxon>Enterobacteriaceae</taxon>
        <taxon>Shigella</taxon>
    </lineage>
</organism>
<accession>B2U2Q4</accession>
<feature type="chain" id="PRO_1000097344" description="Peptide deformylase">
    <location>
        <begin position="1"/>
        <end position="169"/>
    </location>
</feature>
<feature type="active site" evidence="1">
    <location>
        <position position="134"/>
    </location>
</feature>
<feature type="binding site" evidence="1">
    <location>
        <position position="91"/>
    </location>
    <ligand>
        <name>Fe cation</name>
        <dbReference type="ChEBI" id="CHEBI:24875"/>
    </ligand>
</feature>
<feature type="binding site" evidence="1">
    <location>
        <position position="133"/>
    </location>
    <ligand>
        <name>Fe cation</name>
        <dbReference type="ChEBI" id="CHEBI:24875"/>
    </ligand>
</feature>
<feature type="binding site" evidence="1">
    <location>
        <position position="137"/>
    </location>
    <ligand>
        <name>Fe cation</name>
        <dbReference type="ChEBI" id="CHEBI:24875"/>
    </ligand>
</feature>
<keyword id="KW-0378">Hydrolase</keyword>
<keyword id="KW-0408">Iron</keyword>
<keyword id="KW-0479">Metal-binding</keyword>
<keyword id="KW-0648">Protein biosynthesis</keyword>
<keyword id="KW-1185">Reference proteome</keyword>
<dbReference type="EC" id="3.5.1.88" evidence="1"/>
<dbReference type="EMBL" id="CP001063">
    <property type="protein sequence ID" value="ACD08306.1"/>
    <property type="molecule type" value="Genomic_DNA"/>
</dbReference>
<dbReference type="RefSeq" id="WP_000114993.1">
    <property type="nucleotide sequence ID" value="NC_010658.1"/>
</dbReference>
<dbReference type="SMR" id="B2U2Q4"/>
<dbReference type="STRING" id="344609.SbBS512_E3671"/>
<dbReference type="KEGG" id="sbc:SbBS512_E3671"/>
<dbReference type="HOGENOM" id="CLU_061901_2_1_6"/>
<dbReference type="Proteomes" id="UP000001030">
    <property type="component" value="Chromosome"/>
</dbReference>
<dbReference type="GO" id="GO:0046872">
    <property type="term" value="F:metal ion binding"/>
    <property type="evidence" value="ECO:0007669"/>
    <property type="project" value="UniProtKB-KW"/>
</dbReference>
<dbReference type="GO" id="GO:0042586">
    <property type="term" value="F:peptide deformylase activity"/>
    <property type="evidence" value="ECO:0007669"/>
    <property type="project" value="UniProtKB-UniRule"/>
</dbReference>
<dbReference type="GO" id="GO:0043686">
    <property type="term" value="P:co-translational protein modification"/>
    <property type="evidence" value="ECO:0007669"/>
    <property type="project" value="TreeGrafter"/>
</dbReference>
<dbReference type="GO" id="GO:0006412">
    <property type="term" value="P:translation"/>
    <property type="evidence" value="ECO:0007669"/>
    <property type="project" value="UniProtKB-UniRule"/>
</dbReference>
<dbReference type="CDD" id="cd00487">
    <property type="entry name" value="Pep_deformylase"/>
    <property type="match status" value="1"/>
</dbReference>
<dbReference type="FunFam" id="3.90.45.10:FF:000001">
    <property type="entry name" value="Peptide deformylase"/>
    <property type="match status" value="1"/>
</dbReference>
<dbReference type="Gene3D" id="3.90.45.10">
    <property type="entry name" value="Peptide deformylase"/>
    <property type="match status" value="1"/>
</dbReference>
<dbReference type="HAMAP" id="MF_00163">
    <property type="entry name" value="Pep_deformylase"/>
    <property type="match status" value="1"/>
</dbReference>
<dbReference type="InterPro" id="IPR023635">
    <property type="entry name" value="Peptide_deformylase"/>
</dbReference>
<dbReference type="InterPro" id="IPR036821">
    <property type="entry name" value="Peptide_deformylase_sf"/>
</dbReference>
<dbReference type="NCBIfam" id="TIGR00079">
    <property type="entry name" value="pept_deformyl"/>
    <property type="match status" value="1"/>
</dbReference>
<dbReference type="NCBIfam" id="NF001159">
    <property type="entry name" value="PRK00150.1-3"/>
    <property type="match status" value="1"/>
</dbReference>
<dbReference type="PANTHER" id="PTHR10458">
    <property type="entry name" value="PEPTIDE DEFORMYLASE"/>
    <property type="match status" value="1"/>
</dbReference>
<dbReference type="PANTHER" id="PTHR10458:SF21">
    <property type="entry name" value="PEPTIDE DEFORMYLASE"/>
    <property type="match status" value="1"/>
</dbReference>
<dbReference type="Pfam" id="PF01327">
    <property type="entry name" value="Pep_deformylase"/>
    <property type="match status" value="1"/>
</dbReference>
<dbReference type="PIRSF" id="PIRSF004749">
    <property type="entry name" value="Pep_def"/>
    <property type="match status" value="1"/>
</dbReference>
<dbReference type="PRINTS" id="PR01576">
    <property type="entry name" value="PDEFORMYLASE"/>
</dbReference>
<dbReference type="SUPFAM" id="SSF56420">
    <property type="entry name" value="Peptide deformylase"/>
    <property type="match status" value="1"/>
</dbReference>